<reference key="1">
    <citation type="journal article" date="2001" name="J. Biol. Chem.">
        <title>Identification of a human ortholog of Sec34p as a component of the cis-Golgi vesicle tethering machinery.</title>
        <authorList>
            <person name="Suvorova E.S."/>
            <person name="Kurten R.C."/>
            <person name="Lupashin V.V."/>
        </authorList>
    </citation>
    <scope>NUCLEOTIDE SEQUENCE [MRNA] (ISOFORM 1)</scope>
    <scope>SUBCELLULAR LOCATION</scope>
    <scope>TISSUE SPECIFICITY</scope>
    <source>
        <tissue>Fetal brain</tissue>
    </source>
</reference>
<reference key="2">
    <citation type="journal article" date="2002" name="J. Biol. Chem.">
        <title>Sec34 is implicated in traffic from the endoplasmic reticulum to the Golgi and exists in a complex with GTC-90 and ldlBp.</title>
        <authorList>
            <person name="Loh E."/>
            <person name="Hong W."/>
        </authorList>
    </citation>
    <scope>NUCLEOTIDE SEQUENCE [MRNA] (ISOFORM 1)</scope>
    <scope>FUNCTION</scope>
    <scope>VARIANT SER-747</scope>
</reference>
<reference key="3">
    <citation type="journal article" date="2004" name="Nat. Genet.">
        <title>Complete sequencing and characterization of 21,243 full-length human cDNAs.</title>
        <authorList>
            <person name="Ota T."/>
            <person name="Suzuki Y."/>
            <person name="Nishikawa T."/>
            <person name="Otsuki T."/>
            <person name="Sugiyama T."/>
            <person name="Irie R."/>
            <person name="Wakamatsu A."/>
            <person name="Hayashi K."/>
            <person name="Sato H."/>
            <person name="Nagai K."/>
            <person name="Kimura K."/>
            <person name="Makita H."/>
            <person name="Sekine M."/>
            <person name="Obayashi M."/>
            <person name="Nishi T."/>
            <person name="Shibahara T."/>
            <person name="Tanaka T."/>
            <person name="Ishii S."/>
            <person name="Yamamoto J."/>
            <person name="Saito K."/>
            <person name="Kawai Y."/>
            <person name="Isono Y."/>
            <person name="Nakamura Y."/>
            <person name="Nagahari K."/>
            <person name="Murakami K."/>
            <person name="Yasuda T."/>
            <person name="Iwayanagi T."/>
            <person name="Wagatsuma M."/>
            <person name="Shiratori A."/>
            <person name="Sudo H."/>
            <person name="Hosoiri T."/>
            <person name="Kaku Y."/>
            <person name="Kodaira H."/>
            <person name="Kondo H."/>
            <person name="Sugawara M."/>
            <person name="Takahashi M."/>
            <person name="Kanda K."/>
            <person name="Yokoi T."/>
            <person name="Furuya T."/>
            <person name="Kikkawa E."/>
            <person name="Omura Y."/>
            <person name="Abe K."/>
            <person name="Kamihara K."/>
            <person name="Katsuta N."/>
            <person name="Sato K."/>
            <person name="Tanikawa M."/>
            <person name="Yamazaki M."/>
            <person name="Ninomiya K."/>
            <person name="Ishibashi T."/>
            <person name="Yamashita H."/>
            <person name="Murakawa K."/>
            <person name="Fujimori K."/>
            <person name="Tanai H."/>
            <person name="Kimata M."/>
            <person name="Watanabe M."/>
            <person name="Hiraoka S."/>
            <person name="Chiba Y."/>
            <person name="Ishida S."/>
            <person name="Ono Y."/>
            <person name="Takiguchi S."/>
            <person name="Watanabe S."/>
            <person name="Yosida M."/>
            <person name="Hotuta T."/>
            <person name="Kusano J."/>
            <person name="Kanehori K."/>
            <person name="Takahashi-Fujii A."/>
            <person name="Hara H."/>
            <person name="Tanase T.-O."/>
            <person name="Nomura Y."/>
            <person name="Togiya S."/>
            <person name="Komai F."/>
            <person name="Hara R."/>
            <person name="Takeuchi K."/>
            <person name="Arita M."/>
            <person name="Imose N."/>
            <person name="Musashino K."/>
            <person name="Yuuki H."/>
            <person name="Oshima A."/>
            <person name="Sasaki N."/>
            <person name="Aotsuka S."/>
            <person name="Yoshikawa Y."/>
            <person name="Matsunawa H."/>
            <person name="Ichihara T."/>
            <person name="Shiohata N."/>
            <person name="Sano S."/>
            <person name="Moriya S."/>
            <person name="Momiyama H."/>
            <person name="Satoh N."/>
            <person name="Takami S."/>
            <person name="Terashima Y."/>
            <person name="Suzuki O."/>
            <person name="Nakagawa S."/>
            <person name="Senoh A."/>
            <person name="Mizoguchi H."/>
            <person name="Goto Y."/>
            <person name="Shimizu F."/>
            <person name="Wakebe H."/>
            <person name="Hishigaki H."/>
            <person name="Watanabe T."/>
            <person name="Sugiyama A."/>
            <person name="Takemoto M."/>
            <person name="Kawakami B."/>
            <person name="Yamazaki M."/>
            <person name="Watanabe K."/>
            <person name="Kumagai A."/>
            <person name="Itakura S."/>
            <person name="Fukuzumi Y."/>
            <person name="Fujimori Y."/>
            <person name="Komiyama M."/>
            <person name="Tashiro H."/>
            <person name="Tanigami A."/>
            <person name="Fujiwara T."/>
            <person name="Ono T."/>
            <person name="Yamada K."/>
            <person name="Fujii Y."/>
            <person name="Ozaki K."/>
            <person name="Hirao M."/>
            <person name="Ohmori Y."/>
            <person name="Kawabata A."/>
            <person name="Hikiji T."/>
            <person name="Kobatake N."/>
            <person name="Inagaki H."/>
            <person name="Ikema Y."/>
            <person name="Okamoto S."/>
            <person name="Okitani R."/>
            <person name="Kawakami T."/>
            <person name="Noguchi S."/>
            <person name="Itoh T."/>
            <person name="Shigeta K."/>
            <person name="Senba T."/>
            <person name="Matsumura K."/>
            <person name="Nakajima Y."/>
            <person name="Mizuno T."/>
            <person name="Morinaga M."/>
            <person name="Sasaki M."/>
            <person name="Togashi T."/>
            <person name="Oyama M."/>
            <person name="Hata H."/>
            <person name="Watanabe M."/>
            <person name="Komatsu T."/>
            <person name="Mizushima-Sugano J."/>
            <person name="Satoh T."/>
            <person name="Shirai Y."/>
            <person name="Takahashi Y."/>
            <person name="Nakagawa K."/>
            <person name="Okumura K."/>
            <person name="Nagase T."/>
            <person name="Nomura N."/>
            <person name="Kikuchi H."/>
            <person name="Masuho Y."/>
            <person name="Yamashita R."/>
            <person name="Nakai K."/>
            <person name="Yada T."/>
            <person name="Nakamura Y."/>
            <person name="Ohara O."/>
            <person name="Isogai T."/>
            <person name="Sugano S."/>
        </authorList>
    </citation>
    <scope>NUCLEOTIDE SEQUENCE [LARGE SCALE MRNA] (ISOFORM 1)</scope>
    <source>
        <tissue>Placenta</tissue>
    </source>
</reference>
<reference key="4">
    <citation type="journal article" date="2004" name="Nature">
        <title>The DNA sequence and analysis of human chromosome 13.</title>
        <authorList>
            <person name="Dunham A."/>
            <person name="Matthews L.H."/>
            <person name="Burton J."/>
            <person name="Ashurst J.L."/>
            <person name="Howe K.L."/>
            <person name="Ashcroft K.J."/>
            <person name="Beare D.M."/>
            <person name="Burford D.C."/>
            <person name="Hunt S.E."/>
            <person name="Griffiths-Jones S."/>
            <person name="Jones M.C."/>
            <person name="Keenan S.J."/>
            <person name="Oliver K."/>
            <person name="Scott C.E."/>
            <person name="Ainscough R."/>
            <person name="Almeida J.P."/>
            <person name="Ambrose K.D."/>
            <person name="Andrews D.T."/>
            <person name="Ashwell R.I.S."/>
            <person name="Babbage A.K."/>
            <person name="Bagguley C.L."/>
            <person name="Bailey J."/>
            <person name="Bannerjee R."/>
            <person name="Barlow K.F."/>
            <person name="Bates K."/>
            <person name="Beasley H."/>
            <person name="Bird C.P."/>
            <person name="Bray-Allen S."/>
            <person name="Brown A.J."/>
            <person name="Brown J.Y."/>
            <person name="Burrill W."/>
            <person name="Carder C."/>
            <person name="Carter N.P."/>
            <person name="Chapman J.C."/>
            <person name="Clamp M.E."/>
            <person name="Clark S.Y."/>
            <person name="Clarke G."/>
            <person name="Clee C.M."/>
            <person name="Clegg S.C."/>
            <person name="Cobley V."/>
            <person name="Collins J.E."/>
            <person name="Corby N."/>
            <person name="Coville G.J."/>
            <person name="Deloukas P."/>
            <person name="Dhami P."/>
            <person name="Dunham I."/>
            <person name="Dunn M."/>
            <person name="Earthrowl M.E."/>
            <person name="Ellington A.G."/>
            <person name="Faulkner L."/>
            <person name="Frankish A.G."/>
            <person name="Frankland J."/>
            <person name="French L."/>
            <person name="Garner P."/>
            <person name="Garnett J."/>
            <person name="Gilbert J.G.R."/>
            <person name="Gilson C.J."/>
            <person name="Ghori J."/>
            <person name="Grafham D.V."/>
            <person name="Gribble S.M."/>
            <person name="Griffiths C."/>
            <person name="Hall R.E."/>
            <person name="Hammond S."/>
            <person name="Harley J.L."/>
            <person name="Hart E.A."/>
            <person name="Heath P.D."/>
            <person name="Howden P.J."/>
            <person name="Huckle E.J."/>
            <person name="Hunt P.J."/>
            <person name="Hunt A.R."/>
            <person name="Johnson C."/>
            <person name="Johnson D."/>
            <person name="Kay M."/>
            <person name="Kimberley A.M."/>
            <person name="King A."/>
            <person name="Laird G.K."/>
            <person name="Langford C.J."/>
            <person name="Lawlor S."/>
            <person name="Leongamornlert D.A."/>
            <person name="Lloyd D.M."/>
            <person name="Lloyd C."/>
            <person name="Loveland J.E."/>
            <person name="Lovell J."/>
            <person name="Martin S."/>
            <person name="Mashreghi-Mohammadi M."/>
            <person name="McLaren S.J."/>
            <person name="McMurray A."/>
            <person name="Milne S."/>
            <person name="Moore M.J.F."/>
            <person name="Nickerson T."/>
            <person name="Palmer S.A."/>
            <person name="Pearce A.V."/>
            <person name="Peck A.I."/>
            <person name="Pelan S."/>
            <person name="Phillimore B."/>
            <person name="Porter K.M."/>
            <person name="Rice C.M."/>
            <person name="Searle S."/>
            <person name="Sehra H.K."/>
            <person name="Shownkeen R."/>
            <person name="Skuce C.D."/>
            <person name="Smith M."/>
            <person name="Steward C.A."/>
            <person name="Sycamore N."/>
            <person name="Tester J."/>
            <person name="Thomas D.W."/>
            <person name="Tracey A."/>
            <person name="Tromans A."/>
            <person name="Tubby B."/>
            <person name="Wall M."/>
            <person name="Wallis J.M."/>
            <person name="West A.P."/>
            <person name="Whitehead S.L."/>
            <person name="Willey D.L."/>
            <person name="Wilming L."/>
            <person name="Wray P.W."/>
            <person name="Wright M.W."/>
            <person name="Young L."/>
            <person name="Coulson A."/>
            <person name="Durbin R.M."/>
            <person name="Hubbard T."/>
            <person name="Sulston J.E."/>
            <person name="Beck S."/>
            <person name="Bentley D.R."/>
            <person name="Rogers J."/>
            <person name="Ross M.T."/>
        </authorList>
    </citation>
    <scope>NUCLEOTIDE SEQUENCE [LARGE SCALE GENOMIC DNA]</scope>
</reference>
<reference key="5">
    <citation type="journal article" date="2004" name="Genome Res.">
        <title>The status, quality, and expansion of the NIH full-length cDNA project: the Mammalian Gene Collection (MGC).</title>
        <authorList>
            <consortium name="The MGC Project Team"/>
        </authorList>
    </citation>
    <scope>NUCLEOTIDE SEQUENCE [LARGE SCALE MRNA] (ISOFORM 2)</scope>
    <source>
        <tissue>Leukocyte</tissue>
    </source>
</reference>
<reference key="6">
    <citation type="journal article" date="2003" name="Nat. Biotechnol.">
        <title>Exploring proteomes and analyzing protein processing by mass spectrometric identification of sorted N-terminal peptides.</title>
        <authorList>
            <person name="Gevaert K."/>
            <person name="Goethals M."/>
            <person name="Martens L."/>
            <person name="Van Damme J."/>
            <person name="Staes A."/>
            <person name="Thomas G.R."/>
            <person name="Vandekerckhove J."/>
        </authorList>
    </citation>
    <scope>PROTEIN SEQUENCE OF 2-16</scope>
    <scope>ACETYLATION AT ALA-2</scope>
    <source>
        <tissue>Platelet</tissue>
    </source>
</reference>
<reference key="7">
    <citation type="journal article" date="2008" name="Mol. Cell">
        <title>Kinase-selective enrichment enables quantitative phosphoproteomics of the kinome across the cell cycle.</title>
        <authorList>
            <person name="Daub H."/>
            <person name="Olsen J.V."/>
            <person name="Bairlein M."/>
            <person name="Gnad F."/>
            <person name="Oppermann F.S."/>
            <person name="Korner R."/>
            <person name="Greff Z."/>
            <person name="Keri G."/>
            <person name="Stemmann O."/>
            <person name="Mann M."/>
        </authorList>
    </citation>
    <scope>PHOSPHORYLATION [LARGE SCALE ANALYSIS] AT SER-663</scope>
    <scope>IDENTIFICATION BY MASS SPECTROMETRY [LARGE SCALE ANALYSIS]</scope>
    <source>
        <tissue>Cervix carcinoma</tissue>
    </source>
</reference>
<reference key="8">
    <citation type="journal article" date="2009" name="Sci. Signal.">
        <title>Quantitative phosphoproteomic analysis of T cell receptor signaling reveals system-wide modulation of protein-protein interactions.</title>
        <authorList>
            <person name="Mayya V."/>
            <person name="Lundgren D.H."/>
            <person name="Hwang S.-I."/>
            <person name="Rezaul K."/>
            <person name="Wu L."/>
            <person name="Eng J.K."/>
            <person name="Rodionov V."/>
            <person name="Han D.K."/>
        </authorList>
    </citation>
    <scope>PHOSPHORYLATION [LARGE SCALE ANALYSIS] AT SER-663</scope>
    <scope>IDENTIFICATION BY MASS SPECTROMETRY [LARGE SCALE ANALYSIS]</scope>
    <source>
        <tissue>Leukemic T-cell</tissue>
    </source>
</reference>
<reference key="9">
    <citation type="journal article" date="2010" name="Sci. Signal.">
        <title>Quantitative phosphoproteomics reveals widespread full phosphorylation site occupancy during mitosis.</title>
        <authorList>
            <person name="Olsen J.V."/>
            <person name="Vermeulen M."/>
            <person name="Santamaria A."/>
            <person name="Kumar C."/>
            <person name="Miller M.L."/>
            <person name="Jensen L.J."/>
            <person name="Gnad F."/>
            <person name="Cox J."/>
            <person name="Jensen T.S."/>
            <person name="Nigg E.A."/>
            <person name="Brunak S."/>
            <person name="Mann M."/>
        </authorList>
    </citation>
    <scope>PHOSPHORYLATION [LARGE SCALE ANALYSIS] AT SER-663</scope>
    <scope>IDENTIFICATION BY MASS SPECTROMETRY [LARGE SCALE ANALYSIS]</scope>
    <source>
        <tissue>Cervix carcinoma</tissue>
    </source>
</reference>
<reference key="10">
    <citation type="journal article" date="2011" name="BMC Syst. Biol.">
        <title>Initial characterization of the human central proteome.</title>
        <authorList>
            <person name="Burkard T.R."/>
            <person name="Planyavsky M."/>
            <person name="Kaupe I."/>
            <person name="Breitwieser F.P."/>
            <person name="Buerckstuemmer T."/>
            <person name="Bennett K.L."/>
            <person name="Superti-Furga G."/>
            <person name="Colinge J."/>
        </authorList>
    </citation>
    <scope>IDENTIFICATION BY MASS SPECTROMETRY [LARGE SCALE ANALYSIS]</scope>
</reference>
<reference key="11">
    <citation type="journal article" date="2012" name="Mol. Cell. Proteomics">
        <title>Comparative large-scale characterisation of plant vs. mammal proteins reveals similar and idiosyncratic N-alpha acetylation features.</title>
        <authorList>
            <person name="Bienvenut W.V."/>
            <person name="Sumpton D."/>
            <person name="Martinez A."/>
            <person name="Lilla S."/>
            <person name="Espagne C."/>
            <person name="Meinnel T."/>
            <person name="Giglione C."/>
        </authorList>
    </citation>
    <scope>ACETYLATION [LARGE SCALE ANALYSIS] AT ALA-2</scope>
    <scope>CLEAVAGE OF INITIATOR METHIONINE [LARGE SCALE ANALYSIS]</scope>
    <scope>IDENTIFICATION BY MASS SPECTROMETRY [LARGE SCALE ANALYSIS]</scope>
</reference>
<reference key="12">
    <citation type="journal article" date="2012" name="Proc. Natl. Acad. Sci. U.S.A.">
        <title>N-terminal acetylome analyses and functional insights of the N-terminal acetyltransferase NatB.</title>
        <authorList>
            <person name="Van Damme P."/>
            <person name="Lasa M."/>
            <person name="Polevoda B."/>
            <person name="Gazquez C."/>
            <person name="Elosegui-Artola A."/>
            <person name="Kim D.S."/>
            <person name="De Juan-Pardo E."/>
            <person name="Demeyer K."/>
            <person name="Hole K."/>
            <person name="Larrea E."/>
            <person name="Timmerman E."/>
            <person name="Prieto J."/>
            <person name="Arnesen T."/>
            <person name="Sherman F."/>
            <person name="Gevaert K."/>
            <person name="Aldabe R."/>
        </authorList>
    </citation>
    <scope>ACETYLATION [LARGE SCALE ANALYSIS] AT ALA-2</scope>
    <scope>CLEAVAGE OF INITIATOR METHIONINE [LARGE SCALE ANALYSIS]</scope>
    <scope>IDENTIFICATION BY MASS SPECTROMETRY [LARGE SCALE ANALYSIS]</scope>
</reference>
<reference key="13">
    <citation type="journal article" date="2013" name="J. Proteome Res.">
        <title>Toward a comprehensive characterization of a human cancer cell phosphoproteome.</title>
        <authorList>
            <person name="Zhou H."/>
            <person name="Di Palma S."/>
            <person name="Preisinger C."/>
            <person name="Peng M."/>
            <person name="Polat A.N."/>
            <person name="Heck A.J."/>
            <person name="Mohammed S."/>
        </authorList>
    </citation>
    <scope>PHOSPHORYLATION [LARGE SCALE ANALYSIS] AT SER-663</scope>
    <scope>IDENTIFICATION BY MASS SPECTROMETRY [LARGE SCALE ANALYSIS]</scope>
    <source>
        <tissue>Erythroleukemia</tissue>
    </source>
</reference>
<reference key="14">
    <citation type="journal article" date="2014" name="J. Cell Sci.">
        <title>TMEM115 is an integral membrane protein of the Golgi complex involved in retrograde transport.</title>
        <authorList>
            <person name="Ong Y.S."/>
            <person name="Tran T.H."/>
            <person name="Gounko N.V."/>
            <person name="Hong W."/>
        </authorList>
    </citation>
    <scope>INTERACTION WITH TMEM115</scope>
</reference>
<reference key="15">
    <citation type="journal article" date="2015" name="Proteomics">
        <title>N-terminome analysis of the human mitochondrial proteome.</title>
        <authorList>
            <person name="Vaca Jacome A.S."/>
            <person name="Rabilloud T."/>
            <person name="Schaeffer-Reiss C."/>
            <person name="Rompais M."/>
            <person name="Ayoub D."/>
            <person name="Lane L."/>
            <person name="Bairoch A."/>
            <person name="Van Dorsselaer A."/>
            <person name="Carapito C."/>
        </authorList>
    </citation>
    <scope>ACETYLATION [LARGE SCALE ANALYSIS] AT ALA-2</scope>
    <scope>CLEAVAGE OF INITIATOR METHIONINE [LARGE SCALE ANALYSIS]</scope>
    <scope>IDENTIFICATION BY MASS SPECTROMETRY [LARGE SCALE ANALYSIS]</scope>
</reference>
<reference key="16">
    <citation type="journal article" date="2006" name="Science">
        <title>The consensus coding sequences of human breast and colorectal cancers.</title>
        <authorList>
            <person name="Sjoeblom T."/>
            <person name="Jones S."/>
            <person name="Wood L.D."/>
            <person name="Parsons D.W."/>
            <person name="Lin J."/>
            <person name="Barber T.D."/>
            <person name="Mandelker D."/>
            <person name="Leary R.J."/>
            <person name="Ptak J."/>
            <person name="Silliman N."/>
            <person name="Szabo S."/>
            <person name="Buckhaults P."/>
            <person name="Farrell C."/>
            <person name="Meeh P."/>
            <person name="Markowitz S.D."/>
            <person name="Willis J."/>
            <person name="Dawson D."/>
            <person name="Willson J.K.V."/>
            <person name="Gazdar A.F."/>
            <person name="Hartigan J."/>
            <person name="Wu L."/>
            <person name="Liu C."/>
            <person name="Parmigiani G."/>
            <person name="Park B.H."/>
            <person name="Bachman K.E."/>
            <person name="Papadopoulos N."/>
            <person name="Vogelstein B."/>
            <person name="Kinzler K.W."/>
            <person name="Velculescu V.E."/>
        </authorList>
    </citation>
    <scope>VARIANT [LARGE SCALE ANALYSIS] CYS-620</scope>
</reference>
<reference key="17">
    <citation type="journal article" date="2023" name="J. Inherit. Metab. Dis.">
        <title>Biallelic missense variants in COG3 cause a congenital disorder of glycosylation with impairment of retrograde vesicular trafficking.</title>
        <authorList>
            <person name="Duan R."/>
            <person name="Marafi D."/>
            <person name="Xia Z.J."/>
            <person name="Ng B.G."/>
            <person name="Maroofian R."/>
            <person name="Sumya F.T."/>
            <person name="Saad A.K."/>
            <person name="Du H."/>
            <person name="Fatih J.M."/>
            <person name="Hunter J.V."/>
            <person name="Elbendary H.M."/>
            <person name="Baig S.M."/>
            <person name="Abdullah U."/>
            <person name="Ali Z."/>
            <person name="Efthymiou S."/>
            <person name="Murphy D."/>
            <person name="Mitani T."/>
            <person name="Withers M.A."/>
            <person name="Jhangiani S.N."/>
            <person name="Coban-Akdemir Z."/>
            <person name="Calame D.G."/>
            <person name="Pehlivan D."/>
            <person name="Gibbs R.A."/>
            <person name="Posey J.E."/>
            <person name="Houlden H."/>
            <person name="Lupashin V.V."/>
            <person name="Zaki M.S."/>
            <person name="Freeze H.H."/>
            <person name="Lupski J.R."/>
        </authorList>
    </citation>
    <scope>VARIANTS CDG2BB HIS-37 AND PRO-42</scope>
    <scope>CHARACTERIZATION OF VARIANT CDG2BB PRO-42</scope>
    <scope>INVOLVEMENT IN CDG2BB</scope>
    <scope>FUNCTION</scope>
</reference>
<gene>
    <name type="primary">COG3</name>
    <name type="synonym">SEC34</name>
</gene>
<name>COG3_HUMAN</name>
<evidence type="ECO:0000250" key="1"/>
<evidence type="ECO:0000256" key="2">
    <source>
        <dbReference type="SAM" id="MobiDB-lite"/>
    </source>
</evidence>
<evidence type="ECO:0000269" key="3">
    <source>
    </source>
</evidence>
<evidence type="ECO:0000269" key="4">
    <source>
    </source>
</evidence>
<evidence type="ECO:0000269" key="5">
    <source>
    </source>
</evidence>
<evidence type="ECO:0000269" key="6">
    <source>
    </source>
</evidence>
<evidence type="ECO:0000269" key="7">
    <source>
    </source>
</evidence>
<evidence type="ECO:0000269" key="8">
    <source>
    </source>
</evidence>
<evidence type="ECO:0000303" key="9">
    <source>
    </source>
</evidence>
<evidence type="ECO:0000305" key="10"/>
<evidence type="ECO:0007744" key="11">
    <source>
    </source>
</evidence>
<evidence type="ECO:0007744" key="12">
    <source>
    </source>
</evidence>
<evidence type="ECO:0007744" key="13">
    <source>
    </source>
</evidence>
<evidence type="ECO:0007744" key="14">
    <source>
    </source>
</evidence>
<evidence type="ECO:0007744" key="15">
    <source>
    </source>
</evidence>
<evidence type="ECO:0007744" key="16">
    <source>
    </source>
</evidence>
<evidence type="ECO:0007744" key="17">
    <source>
    </source>
</evidence>
<proteinExistence type="evidence at protein level"/>
<organism>
    <name type="scientific">Homo sapiens</name>
    <name type="common">Human</name>
    <dbReference type="NCBI Taxonomy" id="9606"/>
    <lineage>
        <taxon>Eukaryota</taxon>
        <taxon>Metazoa</taxon>
        <taxon>Chordata</taxon>
        <taxon>Craniata</taxon>
        <taxon>Vertebrata</taxon>
        <taxon>Euteleostomi</taxon>
        <taxon>Mammalia</taxon>
        <taxon>Eutheria</taxon>
        <taxon>Euarchontoglires</taxon>
        <taxon>Primates</taxon>
        <taxon>Haplorrhini</taxon>
        <taxon>Catarrhini</taxon>
        <taxon>Hominidae</taxon>
        <taxon>Homo</taxon>
    </lineage>
</organism>
<keyword id="KW-0007">Acetylation</keyword>
<keyword id="KW-0025">Alternative splicing</keyword>
<keyword id="KW-0900">Congenital disorder of glycosylation</keyword>
<keyword id="KW-0903">Direct protein sequencing</keyword>
<keyword id="KW-0333">Golgi apparatus</keyword>
<keyword id="KW-0472">Membrane</keyword>
<keyword id="KW-0597">Phosphoprotein</keyword>
<keyword id="KW-0653">Protein transport</keyword>
<keyword id="KW-1267">Proteomics identification</keyword>
<keyword id="KW-1185">Reference proteome</keyword>
<keyword id="KW-0813">Transport</keyword>
<accession>Q96JB2</accession>
<accession>B2RAW5</accession>
<accession>Q5VT70</accession>
<accession>Q8IXX4</accession>
<accession>Q9BZ92</accession>
<dbReference type="EMBL" id="AF349676">
    <property type="protein sequence ID" value="AAK66974.1"/>
    <property type="molecule type" value="mRNA"/>
</dbReference>
<dbReference type="EMBL" id="AF332595">
    <property type="protein sequence ID" value="AAK06848.1"/>
    <property type="molecule type" value="mRNA"/>
</dbReference>
<dbReference type="EMBL" id="AK314387">
    <property type="protein sequence ID" value="BAG37012.1"/>
    <property type="molecule type" value="mRNA"/>
</dbReference>
<dbReference type="EMBL" id="AL139326">
    <property type="status" value="NOT_ANNOTATED_CDS"/>
    <property type="molecule type" value="Genomic_DNA"/>
</dbReference>
<dbReference type="EMBL" id="AL606514">
    <property type="status" value="NOT_ANNOTATED_CDS"/>
    <property type="molecule type" value="Genomic_DNA"/>
</dbReference>
<dbReference type="EMBL" id="BC038953">
    <property type="protein sequence ID" value="AAH38953.1"/>
    <property type="molecule type" value="mRNA"/>
</dbReference>
<dbReference type="CCDS" id="CCDS9398.1">
    <molecule id="Q96JB2-1"/>
</dbReference>
<dbReference type="RefSeq" id="NP_113619.3">
    <molecule id="Q96JB2-1"/>
    <property type="nucleotide sequence ID" value="NM_031431.4"/>
</dbReference>
<dbReference type="SMR" id="Q96JB2"/>
<dbReference type="BioGRID" id="123680">
    <property type="interactions" value="121"/>
</dbReference>
<dbReference type="ComplexPortal" id="CPX-6199">
    <property type="entry name" value="COG tethering complex"/>
</dbReference>
<dbReference type="CORUM" id="Q96JB2"/>
<dbReference type="FunCoup" id="Q96JB2">
    <property type="interactions" value="3443"/>
</dbReference>
<dbReference type="IntAct" id="Q96JB2">
    <property type="interactions" value="66"/>
</dbReference>
<dbReference type="MINT" id="Q96JB2"/>
<dbReference type="STRING" id="9606.ENSP00000258654"/>
<dbReference type="ChEMBL" id="CHEMBL4105842"/>
<dbReference type="GlyCosmos" id="Q96JB2">
    <property type="glycosylation" value="3 sites, 1 glycan"/>
</dbReference>
<dbReference type="GlyGen" id="Q96JB2">
    <property type="glycosylation" value="3 sites, 1 O-linked glycan (3 sites)"/>
</dbReference>
<dbReference type="iPTMnet" id="Q96JB2"/>
<dbReference type="PhosphoSitePlus" id="Q96JB2"/>
<dbReference type="BioMuta" id="COG3"/>
<dbReference type="DMDM" id="85701302"/>
<dbReference type="jPOST" id="Q96JB2"/>
<dbReference type="MassIVE" id="Q96JB2"/>
<dbReference type="PaxDb" id="9606-ENSP00000258654"/>
<dbReference type="PeptideAtlas" id="Q96JB2"/>
<dbReference type="ProteomicsDB" id="76926">
    <molecule id="Q96JB2-1"/>
</dbReference>
<dbReference type="ProteomicsDB" id="76927">
    <molecule id="Q96JB2-2"/>
</dbReference>
<dbReference type="Pumba" id="Q96JB2"/>
<dbReference type="Antibodypedia" id="23637">
    <property type="antibodies" value="162 antibodies from 26 providers"/>
</dbReference>
<dbReference type="DNASU" id="83548"/>
<dbReference type="Ensembl" id="ENST00000349995.10">
    <molecule id="Q96JB2-1"/>
    <property type="protein sequence ID" value="ENSP00000258654.8"/>
    <property type="gene ID" value="ENSG00000136152.15"/>
</dbReference>
<dbReference type="Ensembl" id="ENST00000617493.1">
    <molecule id="Q96JB2-2"/>
    <property type="protein sequence ID" value="ENSP00000481332.1"/>
    <property type="gene ID" value="ENSG00000136152.15"/>
</dbReference>
<dbReference type="GeneID" id="83548"/>
<dbReference type="KEGG" id="hsa:83548"/>
<dbReference type="MANE-Select" id="ENST00000349995.10">
    <property type="protein sequence ID" value="ENSP00000258654.8"/>
    <property type="RefSeq nucleotide sequence ID" value="NM_031431.4"/>
    <property type="RefSeq protein sequence ID" value="NP_113619.3"/>
</dbReference>
<dbReference type="UCSC" id="uc001vai.4">
    <molecule id="Q96JB2-1"/>
    <property type="organism name" value="human"/>
</dbReference>
<dbReference type="AGR" id="HGNC:18619"/>
<dbReference type="CTD" id="83548"/>
<dbReference type="DisGeNET" id="83548"/>
<dbReference type="GeneCards" id="COG3"/>
<dbReference type="HGNC" id="HGNC:18619">
    <property type="gene designation" value="COG3"/>
</dbReference>
<dbReference type="HPA" id="ENSG00000136152">
    <property type="expression patterns" value="Low tissue specificity"/>
</dbReference>
<dbReference type="MalaCards" id="COG3"/>
<dbReference type="MIM" id="606975">
    <property type="type" value="gene"/>
</dbReference>
<dbReference type="MIM" id="620546">
    <property type="type" value="phenotype"/>
</dbReference>
<dbReference type="neXtProt" id="NX_Q96JB2"/>
<dbReference type="OpenTargets" id="ENSG00000136152"/>
<dbReference type="PharmGKB" id="PA38602"/>
<dbReference type="VEuPathDB" id="HostDB:ENSG00000136152"/>
<dbReference type="eggNOG" id="KOG2604">
    <property type="taxonomic scope" value="Eukaryota"/>
</dbReference>
<dbReference type="GeneTree" id="ENSGT00390000015682"/>
<dbReference type="HOGENOM" id="CLU_011639_1_1_1"/>
<dbReference type="InParanoid" id="Q96JB2"/>
<dbReference type="OMA" id="DEFELWG"/>
<dbReference type="OrthoDB" id="296793at2759"/>
<dbReference type="PAN-GO" id="Q96JB2">
    <property type="GO annotations" value="3 GO annotations based on evolutionary models"/>
</dbReference>
<dbReference type="PhylomeDB" id="Q96JB2"/>
<dbReference type="TreeFam" id="TF314200"/>
<dbReference type="PathwayCommons" id="Q96JB2"/>
<dbReference type="Reactome" id="R-HSA-6807878">
    <property type="pathway name" value="COPI-mediated anterograde transport"/>
</dbReference>
<dbReference type="Reactome" id="R-HSA-6811438">
    <property type="pathway name" value="Intra-Golgi traffic"/>
</dbReference>
<dbReference type="Reactome" id="R-HSA-6811440">
    <property type="pathway name" value="Retrograde transport at the Trans-Golgi-Network"/>
</dbReference>
<dbReference type="SignaLink" id="Q96JB2"/>
<dbReference type="BioGRID-ORCS" id="83548">
    <property type="hits" value="626 hits in 1183 CRISPR screens"/>
</dbReference>
<dbReference type="CD-CODE" id="FB4E32DD">
    <property type="entry name" value="Presynaptic clusters and postsynaptic densities"/>
</dbReference>
<dbReference type="ChiTaRS" id="COG3">
    <property type="organism name" value="human"/>
</dbReference>
<dbReference type="GeneWiki" id="COG3"/>
<dbReference type="GenomeRNAi" id="83548"/>
<dbReference type="Pharos" id="Q96JB2">
    <property type="development level" value="Tbio"/>
</dbReference>
<dbReference type="PRO" id="PR:Q96JB2"/>
<dbReference type="Proteomes" id="UP000005640">
    <property type="component" value="Chromosome 13"/>
</dbReference>
<dbReference type="RNAct" id="Q96JB2">
    <property type="molecule type" value="protein"/>
</dbReference>
<dbReference type="Bgee" id="ENSG00000136152">
    <property type="expression patterns" value="Expressed in body of pancreas and 161 other cell types or tissues"/>
</dbReference>
<dbReference type="ExpressionAtlas" id="Q96JB2">
    <property type="expression patterns" value="baseline and differential"/>
</dbReference>
<dbReference type="GO" id="GO:0005801">
    <property type="term" value="C:cis-Golgi network"/>
    <property type="evidence" value="ECO:0007669"/>
    <property type="project" value="InterPro"/>
</dbReference>
<dbReference type="GO" id="GO:0005829">
    <property type="term" value="C:cytosol"/>
    <property type="evidence" value="ECO:0000314"/>
    <property type="project" value="HPA"/>
</dbReference>
<dbReference type="GO" id="GO:0005794">
    <property type="term" value="C:Golgi apparatus"/>
    <property type="evidence" value="ECO:0000314"/>
    <property type="project" value="HPA"/>
</dbReference>
<dbReference type="GO" id="GO:0032580">
    <property type="term" value="C:Golgi cisterna membrane"/>
    <property type="evidence" value="ECO:0007669"/>
    <property type="project" value="UniProtKB-SubCell"/>
</dbReference>
<dbReference type="GO" id="GO:0000139">
    <property type="term" value="C:Golgi membrane"/>
    <property type="evidence" value="ECO:0000304"/>
    <property type="project" value="Reactome"/>
</dbReference>
<dbReference type="GO" id="GO:0017119">
    <property type="term" value="C:Golgi transport complex"/>
    <property type="evidence" value="ECO:0000314"/>
    <property type="project" value="UniProtKB"/>
</dbReference>
<dbReference type="GO" id="GO:0005886">
    <property type="term" value="C:plasma membrane"/>
    <property type="evidence" value="ECO:0000314"/>
    <property type="project" value="HPA"/>
</dbReference>
<dbReference type="GO" id="GO:0032588">
    <property type="term" value="C:trans-Golgi network membrane"/>
    <property type="evidence" value="ECO:0000304"/>
    <property type="project" value="Reactome"/>
</dbReference>
<dbReference type="GO" id="GO:0006888">
    <property type="term" value="P:endoplasmic reticulum to Golgi vesicle-mediated transport"/>
    <property type="evidence" value="ECO:0000314"/>
    <property type="project" value="UniProtKB"/>
</dbReference>
<dbReference type="GO" id="GO:0070085">
    <property type="term" value="P:glycosylation"/>
    <property type="evidence" value="ECO:0000315"/>
    <property type="project" value="ComplexPortal"/>
</dbReference>
<dbReference type="GO" id="GO:0007030">
    <property type="term" value="P:Golgi organization"/>
    <property type="evidence" value="ECO:0000315"/>
    <property type="project" value="UniProtKB"/>
</dbReference>
<dbReference type="GO" id="GO:0006891">
    <property type="term" value="P:intra-Golgi vesicle-mediated transport"/>
    <property type="evidence" value="ECO:0000314"/>
    <property type="project" value="UniProtKB"/>
</dbReference>
<dbReference type="GO" id="GO:0006886">
    <property type="term" value="P:intracellular protein transport"/>
    <property type="evidence" value="ECO:0007669"/>
    <property type="project" value="InterPro"/>
</dbReference>
<dbReference type="GO" id="GO:0006486">
    <property type="term" value="P:protein glycosylation"/>
    <property type="evidence" value="ECO:0000315"/>
    <property type="project" value="UniProtKB"/>
</dbReference>
<dbReference type="GO" id="GO:0033365">
    <property type="term" value="P:protein localization to organelle"/>
    <property type="evidence" value="ECO:0000315"/>
    <property type="project" value="UniProtKB"/>
</dbReference>
<dbReference type="GO" id="GO:0050821">
    <property type="term" value="P:protein stabilization"/>
    <property type="evidence" value="ECO:0000315"/>
    <property type="project" value="UniProtKB"/>
</dbReference>
<dbReference type="GO" id="GO:0000301">
    <property type="term" value="P:retrograde transport, vesicle recycling within Golgi"/>
    <property type="evidence" value="ECO:0000315"/>
    <property type="project" value="ComplexPortal"/>
</dbReference>
<dbReference type="GO" id="GO:0006890">
    <property type="term" value="P:retrograde vesicle-mediated transport, Golgi to endoplasmic reticulum"/>
    <property type="evidence" value="ECO:0000315"/>
    <property type="project" value="UniProtKB"/>
</dbReference>
<dbReference type="InterPro" id="IPR048685">
    <property type="entry name" value="COG3_C"/>
</dbReference>
<dbReference type="InterPro" id="IPR048320">
    <property type="entry name" value="COG3_N"/>
</dbReference>
<dbReference type="InterPro" id="IPR007265">
    <property type="entry name" value="COG_su3"/>
</dbReference>
<dbReference type="PANTHER" id="PTHR13302">
    <property type="entry name" value="CONSERVED OLIGOMERIC GOLGI COMPLEX COMPONENT 3"/>
    <property type="match status" value="1"/>
</dbReference>
<dbReference type="PANTHER" id="PTHR13302:SF8">
    <property type="entry name" value="CONSERVED OLIGOMERIC GOLGI COMPLEX SUBUNIT 3"/>
    <property type="match status" value="1"/>
</dbReference>
<dbReference type="Pfam" id="PF20671">
    <property type="entry name" value="COG3_C"/>
    <property type="match status" value="1"/>
</dbReference>
<dbReference type="Pfam" id="PF04136">
    <property type="entry name" value="COG3_N"/>
    <property type="match status" value="1"/>
</dbReference>
<sequence>MAEAALLLLPEAAAERDAREKLALWDRRPDTTAPLTDRQTDSVLELKAAAENLPVPAELPIEDLCSLTSQSLPIELTSVVPESTEDILLKGFTSLGMEEERIETAQQFFSWFAKLQTQMDQDEGTKYRQMRDYLSGFQEQCDAILNDVNSALQHLESLQKQYLFVSNKTGTLHEACEQLLKEQSELVDLAENIQQKLSYFNELETINTKLNSPTLSVNSDGFIPMLAKLDDCITYISSHPNFKDYPIYLLKFKQCLSKALHLMKTYTVNTLQTLTSQLLKRDPSSVPNADNAFTLFYVKFRAAAPKVRTLIEQIELRSEKIPEYQQLLNDIHQCYLDQRELLLGPSIACTVAELTSQNNRDHCALVRSGCAFMVHVCQDEHQLYNEFFTKPTSKLDELLEKLCVSLYDVFRPLIIHVIHLETLSELCGILKNEVLEDHVQNNAEQLGAFAAGVKQMLEDVQERLVYRTHIYIQTDITGYKPAPGDLAYPDKLVMMEQIAQSLKDEQKKVPSEASFSDVHLEEGESNSLTKSGSTESLNPRPQTTISPADLHGMWYPTVRRTLVCLSKLYRCIDRAVFQGLSQEALSACIQSLLGASESISKNKTQIDGQLFLIKHLLILREQIAPFHTEFTIKEISLDLKKTRDAAFKILNPMTVPRFFRLNSNNALIEFLLEGTPEIREHYLDSKKDVDRHLKSACEQFIQQQTKLFVEQLEEFMTKVSALKTMASQGGPKYTLSQQPWAQPAKVNDLAATAYKTIKTKLPVTLRSMSLYLSNKDTEFILFKPVRNNIQQVFQKFHALLKEEFSPEDIQIIACPSMEQLSLLLLVSK</sequence>
<feature type="initiator methionine" description="Removed" evidence="5 14 15 17">
    <location>
        <position position="1"/>
    </location>
</feature>
<feature type="chain" id="PRO_0000213500" description="Conserved oligomeric Golgi complex subunit 3">
    <location>
        <begin position="2"/>
        <end position="828"/>
    </location>
</feature>
<feature type="region of interest" description="Disordered" evidence="2">
    <location>
        <begin position="504"/>
        <end position="543"/>
    </location>
</feature>
<feature type="compositionally biased region" description="Polar residues" evidence="2">
    <location>
        <begin position="525"/>
        <end position="543"/>
    </location>
</feature>
<feature type="modified residue" description="N-acetylalanine" evidence="5 14 15 17">
    <location>
        <position position="2"/>
    </location>
</feature>
<feature type="modified residue" description="Phosphoserine" evidence="11 12 13 16">
    <location>
        <position position="663"/>
    </location>
</feature>
<feature type="splice variant" id="VSP_013652" description="In isoform 2." evidence="9">
    <original>AE</original>
    <variation>GK</variation>
    <location>
        <begin position="443"/>
        <end position="444"/>
    </location>
</feature>
<feature type="splice variant" id="VSP_013653" description="In isoform 2." evidence="9">
    <location>
        <begin position="445"/>
        <end position="828"/>
    </location>
</feature>
<feature type="sequence variant" id="VAR_089066" description="In CDG2BB; uncertain significance; dbSNP:rs755933277." evidence="8">
    <original>D</original>
    <variation>H</variation>
    <location>
        <position position="37"/>
    </location>
</feature>
<feature type="sequence variant" id="VAR_089067" description="In CDG2BB; uncertain significance; decreased retrograde (Golgi to ER) transport in homozygous patient cells; decreased protein levels in homozygous patient cells." evidence="8">
    <original>S</original>
    <variation>P</variation>
    <location>
        <position position="42"/>
    </location>
</feature>
<feature type="sequence variant" id="VAR_036454" description="In a breast cancer sample; somatic mutation; dbSNP:rs747042102." evidence="6">
    <original>R</original>
    <variation>C</variation>
    <location>
        <position position="620"/>
    </location>
</feature>
<feature type="sequence variant" id="VAR_055663" description="In dbSNP:rs2274285." evidence="4">
    <original>N</original>
    <variation>S</variation>
    <location>
        <position position="747"/>
    </location>
</feature>
<feature type="sequence conflict" description="In Ref. 1; AAK66974." evidence="10" ref="1">
    <original>QQ</original>
    <variation>HE</variation>
    <location>
        <begin position="106"/>
        <end position="107"/>
    </location>
</feature>
<feature type="sequence conflict" description="In Ref. 1; AAK66974, 2; AAK06848 and 3; BAG37012." evidence="10" ref="1 2 3">
    <original>L</original>
    <variation>S</variation>
    <location>
        <position position="825"/>
    </location>
</feature>
<comment type="function">
    <text evidence="4 8">Involved in ER-Golgi transport (PubMed:11929878). Also involved in retrograde (Golgi to ER) transport (PubMed:37711075).</text>
</comment>
<comment type="subunit">
    <text evidence="1 7">Component of the conserved oligomeric Golgi complex which is composed of eight different subunits and is required for normal Golgi morphology and localization. Interacts with TMEM115.</text>
</comment>
<comment type="interaction">
    <interactant intactId="EBI-9091495">
        <id>Q96JB2-2</id>
    </interactant>
    <interactant intactId="EBI-11096309">
        <id>Q9NYB9-2</id>
        <label>ABI2</label>
    </interactant>
    <organismsDiffer>false</organismsDiffer>
    <experiments>3</experiments>
</comment>
<comment type="interaction">
    <interactant intactId="EBI-9091495">
        <id>Q96JB2-2</id>
    </interactant>
    <interactant intactId="EBI-739784">
        <id>Q9BW66</id>
        <label>CINP</label>
    </interactant>
    <organismsDiffer>false</organismsDiffer>
    <experiments>3</experiments>
</comment>
<comment type="interaction">
    <interactant intactId="EBI-9091495">
        <id>Q96JB2-2</id>
    </interactant>
    <interactant intactId="EBI-715074">
        <id>Q13561</id>
        <label>DCTN2</label>
    </interactant>
    <organismsDiffer>false</organismsDiffer>
    <experiments>3</experiments>
</comment>
<comment type="interaction">
    <interactant intactId="EBI-9091495">
        <id>Q96JB2-2</id>
    </interactant>
    <interactant intactId="EBI-14069005">
        <id>Q9BVG8-5</id>
        <label>KIFC3</label>
    </interactant>
    <organismsDiffer>false</organismsDiffer>
    <experiments>3</experiments>
</comment>
<comment type="interaction">
    <interactant intactId="EBI-9091495">
        <id>Q96JB2-2</id>
    </interactant>
    <interactant intactId="EBI-948266">
        <id>O14901</id>
        <label>KLF11</label>
    </interactant>
    <organismsDiffer>false</organismsDiffer>
    <experiments>3</experiments>
</comment>
<comment type="interaction">
    <interactant intactId="EBI-9091495">
        <id>Q96JB2-2</id>
    </interactant>
    <interactant intactId="EBI-2811583">
        <id>Q9BVL2</id>
        <label>NUP58</label>
    </interactant>
    <organismsDiffer>false</organismsDiffer>
    <experiments>6</experiments>
</comment>
<comment type="interaction">
    <interactant intactId="EBI-9091495">
        <id>Q96JB2-2</id>
    </interactant>
    <interactant intactId="EBI-742688">
        <id>Q9NZD8</id>
        <label>SPG21</label>
    </interactant>
    <organismsDiffer>false</organismsDiffer>
    <experiments>3</experiments>
</comment>
<comment type="interaction">
    <interactant intactId="EBI-9091495">
        <id>Q96JB2-2</id>
    </interactant>
    <interactant intactId="EBI-749840">
        <id>Q9C040</id>
        <label>TRIM2</label>
    </interactant>
    <organismsDiffer>false</organismsDiffer>
    <experiments>3</experiments>
</comment>
<comment type="interaction">
    <interactant intactId="EBI-9091495">
        <id>Q96JB2-2</id>
    </interactant>
    <interactant intactId="EBI-10687282">
        <id>Q9NRE2</id>
        <label>TSHZ2</label>
    </interactant>
    <organismsDiffer>false</organismsDiffer>
    <experiments>3</experiments>
</comment>
<comment type="subcellular location">
    <subcellularLocation>
        <location evidence="3">Golgi apparatus</location>
        <location evidence="3">Golgi stack membrane</location>
        <topology evidence="3">Peripheral membrane protein</topology>
    </subcellularLocation>
    <text>Associated with the peripheral membrane of cis/medial cisternae.</text>
</comment>
<comment type="alternative products">
    <event type="alternative splicing"/>
    <isoform>
        <id>Q96JB2-1</id>
        <name>1</name>
        <sequence type="displayed"/>
    </isoform>
    <isoform>
        <id>Q96JB2-2</id>
        <name>2</name>
        <sequence type="described" ref="VSP_013652 VSP_013653"/>
    </isoform>
</comment>
<comment type="tissue specificity">
    <text evidence="3">Widely expressed with highest levels in pancreas and testis and lowest levels in lung.</text>
</comment>
<comment type="disease" evidence="8">
    <disease id="DI-06780">
        <name>Congenital disorder of glycosylation 2BB</name>
        <acronym>CDG2BB</acronym>
        <description>A multisystem disorder caused by a defect in glycoprotein biosynthesis and characterized by under-glycosylated serum glycoproteins. Congenital disorders of glycosylation result in a wide variety of clinical features, such as defects in the nervous system development, psychomotor retardation, dysmorphic features, hypotonia, coagulation disorders, and immunodeficiency. The broad spectrum of features reflects the critical role of N-glycoproteins during embryonic development, differentiation, and maintenance of cell functions. CDG2BB is an autosomal recessive form characterized by global developmental delay, severe intellectual disability, microcephaly, epilepsy, facial dysmorphism, and variable neurological findings.</description>
        <dbReference type="MIM" id="620546"/>
    </disease>
    <text>The disease may be caused by variants affecting the gene represented in this entry.</text>
</comment>
<comment type="similarity">
    <text evidence="10">Belongs to the COG3 family.</text>
</comment>
<protein>
    <recommendedName>
        <fullName>Conserved oligomeric Golgi complex subunit 3</fullName>
        <shortName>COG complex subunit 3</shortName>
    </recommendedName>
    <alternativeName>
        <fullName>Component of oligomeric Golgi complex 3</fullName>
    </alternativeName>
    <alternativeName>
        <fullName>Vesicle-docking protein SEC34 homolog</fullName>
    </alternativeName>
    <alternativeName>
        <fullName>p94</fullName>
    </alternativeName>
</protein>